<accession>B2G944</accession>
<organism>
    <name type="scientific">Limosilactobacillus reuteri subsp. reuteri (strain JCM 1112)</name>
    <name type="common">Lactobacillus reuteri</name>
    <dbReference type="NCBI Taxonomy" id="557433"/>
    <lineage>
        <taxon>Bacteria</taxon>
        <taxon>Bacillati</taxon>
        <taxon>Bacillota</taxon>
        <taxon>Bacilli</taxon>
        <taxon>Lactobacillales</taxon>
        <taxon>Lactobacillaceae</taxon>
        <taxon>Limosilactobacillus</taxon>
    </lineage>
</organism>
<comment type="function">
    <text evidence="1">Involved in coproporphyrin-dependent heme b biosynthesis. Catalyzes the insertion of ferrous iron into coproporphyrin III to form Fe-coproporphyrin III.</text>
</comment>
<comment type="catalytic activity">
    <reaction evidence="1">
        <text>Fe-coproporphyrin III + 2 H(+) = coproporphyrin III + Fe(2+)</text>
        <dbReference type="Rhea" id="RHEA:49572"/>
        <dbReference type="ChEBI" id="CHEBI:15378"/>
        <dbReference type="ChEBI" id="CHEBI:29033"/>
        <dbReference type="ChEBI" id="CHEBI:68438"/>
        <dbReference type="ChEBI" id="CHEBI:131725"/>
        <dbReference type="EC" id="4.99.1.9"/>
    </reaction>
    <physiologicalReaction direction="right-to-left" evidence="1">
        <dbReference type="Rhea" id="RHEA:49574"/>
    </physiologicalReaction>
</comment>
<comment type="pathway">
    <text evidence="1">Porphyrin-containing compound metabolism; protoheme biosynthesis.</text>
</comment>
<comment type="subcellular location">
    <subcellularLocation>
        <location evidence="1">Cytoplasm</location>
    </subcellularLocation>
</comment>
<comment type="similarity">
    <text evidence="1">Belongs to the ferrochelatase family.</text>
</comment>
<feature type="chain" id="PRO_1000116056" description="Coproporphyrin III ferrochelatase">
    <location>
        <begin position="1"/>
        <end position="310"/>
    </location>
</feature>
<feature type="binding site" evidence="1">
    <location>
        <position position="184"/>
    </location>
    <ligand>
        <name>Fe(2+)</name>
        <dbReference type="ChEBI" id="CHEBI:29033"/>
    </ligand>
</feature>
<feature type="binding site" evidence="1">
    <location>
        <position position="265"/>
    </location>
    <ligand>
        <name>Fe(2+)</name>
        <dbReference type="ChEBI" id="CHEBI:29033"/>
    </ligand>
</feature>
<reference key="1">
    <citation type="journal article" date="2008" name="DNA Res.">
        <title>Comparative genome analysis of Lactobacillus reuteri and Lactobacillus fermentum reveal a genomic island for reuterin and cobalamin production.</title>
        <authorList>
            <person name="Morita H."/>
            <person name="Toh H."/>
            <person name="Fukuda S."/>
            <person name="Horikawa H."/>
            <person name="Oshima K."/>
            <person name="Suzuki T."/>
            <person name="Murakami M."/>
            <person name="Hisamatsu S."/>
            <person name="Kato Y."/>
            <person name="Takizawa T."/>
            <person name="Fukuoka H."/>
            <person name="Yoshimura T."/>
            <person name="Itoh K."/>
            <person name="O'Sullivan D.J."/>
            <person name="McKay L.L."/>
            <person name="Ohno H."/>
            <person name="Kikuchi J."/>
            <person name="Masaoka T."/>
            <person name="Hattori M."/>
        </authorList>
    </citation>
    <scope>NUCLEOTIDE SEQUENCE [LARGE SCALE GENOMIC DNA]</scope>
    <source>
        <strain>JCM 1112</strain>
    </source>
</reference>
<protein>
    <recommendedName>
        <fullName evidence="1">Coproporphyrin III ferrochelatase</fullName>
        <ecNumber evidence="1">4.99.1.9</ecNumber>
    </recommendedName>
</protein>
<gene>
    <name evidence="1" type="primary">cpfC</name>
    <name type="ordered locus">LAR_1460</name>
</gene>
<evidence type="ECO:0000255" key="1">
    <source>
        <dbReference type="HAMAP-Rule" id="MF_00323"/>
    </source>
</evidence>
<dbReference type="EC" id="4.99.1.9" evidence="1"/>
<dbReference type="EMBL" id="AP007281">
    <property type="protein sequence ID" value="BAG25976.1"/>
    <property type="molecule type" value="Genomic_DNA"/>
</dbReference>
<dbReference type="SMR" id="B2G944"/>
<dbReference type="KEGG" id="lrf:LAR_1460"/>
<dbReference type="HOGENOM" id="CLU_018884_0_0_9"/>
<dbReference type="UniPathway" id="UPA00252"/>
<dbReference type="GO" id="GO:0005737">
    <property type="term" value="C:cytoplasm"/>
    <property type="evidence" value="ECO:0007669"/>
    <property type="project" value="UniProtKB-SubCell"/>
</dbReference>
<dbReference type="GO" id="GO:0004325">
    <property type="term" value="F:ferrochelatase activity"/>
    <property type="evidence" value="ECO:0007669"/>
    <property type="project" value="UniProtKB-UniRule"/>
</dbReference>
<dbReference type="GO" id="GO:0046872">
    <property type="term" value="F:metal ion binding"/>
    <property type="evidence" value="ECO:0007669"/>
    <property type="project" value="UniProtKB-KW"/>
</dbReference>
<dbReference type="GO" id="GO:0006783">
    <property type="term" value="P:heme biosynthetic process"/>
    <property type="evidence" value="ECO:0007669"/>
    <property type="project" value="UniProtKB-UniRule"/>
</dbReference>
<dbReference type="CDD" id="cd00419">
    <property type="entry name" value="Ferrochelatase_C"/>
    <property type="match status" value="1"/>
</dbReference>
<dbReference type="CDD" id="cd03411">
    <property type="entry name" value="Ferrochelatase_N"/>
    <property type="match status" value="1"/>
</dbReference>
<dbReference type="Gene3D" id="3.40.50.1400">
    <property type="match status" value="2"/>
</dbReference>
<dbReference type="HAMAP" id="MF_00323">
    <property type="entry name" value="Ferrochelatase"/>
    <property type="match status" value="1"/>
</dbReference>
<dbReference type="InterPro" id="IPR001015">
    <property type="entry name" value="Ferrochelatase"/>
</dbReference>
<dbReference type="InterPro" id="IPR019772">
    <property type="entry name" value="Ferrochelatase_AS"/>
</dbReference>
<dbReference type="InterPro" id="IPR033644">
    <property type="entry name" value="Ferrochelatase_C"/>
</dbReference>
<dbReference type="InterPro" id="IPR033659">
    <property type="entry name" value="Ferrochelatase_N"/>
</dbReference>
<dbReference type="NCBIfam" id="TIGR00109">
    <property type="entry name" value="hemH"/>
    <property type="match status" value="1"/>
</dbReference>
<dbReference type="PANTHER" id="PTHR11108">
    <property type="entry name" value="FERROCHELATASE"/>
    <property type="match status" value="1"/>
</dbReference>
<dbReference type="PANTHER" id="PTHR11108:SF1">
    <property type="entry name" value="FERROCHELATASE, MITOCHONDRIAL"/>
    <property type="match status" value="1"/>
</dbReference>
<dbReference type="Pfam" id="PF00762">
    <property type="entry name" value="Ferrochelatase"/>
    <property type="match status" value="1"/>
</dbReference>
<dbReference type="SUPFAM" id="SSF53800">
    <property type="entry name" value="Chelatase"/>
    <property type="match status" value="1"/>
</dbReference>
<dbReference type="PROSITE" id="PS00534">
    <property type="entry name" value="FERROCHELATASE"/>
    <property type="match status" value="1"/>
</dbReference>
<keyword id="KW-0963">Cytoplasm</keyword>
<keyword id="KW-0350">Heme biosynthesis</keyword>
<keyword id="KW-0408">Iron</keyword>
<keyword id="KW-0456">Lyase</keyword>
<keyword id="KW-0479">Metal-binding</keyword>
<keyword id="KW-0627">Porphyrin biosynthesis</keyword>
<proteinExistence type="inferred from homology"/>
<sequence length="310" mass="35387">MKKNGLLLVNLGSPDTPTTPDVKRYLKEFLSDRNVIEMPPALWQPLLRGIILPTRSWRSATFYRNCWTKDGSPLIVYTERLVAKVQGLMPEWVVKMAMTYGKPKISDTITGMKKECQNITVLPLFPFFTKSTTQTVIDKVKDADPEAKIIDRFSAEEDYLDLLAKQIQTAWDRGKYDKLLISYHGIPTAMVNHGDPYRDETEAATAELIKRLDIPEKQIKMAYQSKFGPMPWLKPYLRNTLLNEAQLGHRDVLVVAPSFVADCLETLEEDQVQNYQVFRENGGNNLVMVPSLNDSPEFAQFITDLVQRKG</sequence>
<name>CPFC_LIMRJ</name>